<accession>B0BBI9</accession>
<gene>
    <name evidence="1" type="primary">leuS</name>
    <name type="ordered locus">CTLon_0456</name>
</gene>
<protein>
    <recommendedName>
        <fullName evidence="1">Leucine--tRNA ligase</fullName>
        <ecNumber evidence="1">6.1.1.4</ecNumber>
    </recommendedName>
    <alternativeName>
        <fullName evidence="1">Leucyl-tRNA synthetase</fullName>
        <shortName evidence="1">LeuRS</shortName>
    </alternativeName>
</protein>
<comment type="catalytic activity">
    <reaction evidence="1">
        <text>tRNA(Leu) + L-leucine + ATP = L-leucyl-tRNA(Leu) + AMP + diphosphate</text>
        <dbReference type="Rhea" id="RHEA:11688"/>
        <dbReference type="Rhea" id="RHEA-COMP:9613"/>
        <dbReference type="Rhea" id="RHEA-COMP:9622"/>
        <dbReference type="ChEBI" id="CHEBI:30616"/>
        <dbReference type="ChEBI" id="CHEBI:33019"/>
        <dbReference type="ChEBI" id="CHEBI:57427"/>
        <dbReference type="ChEBI" id="CHEBI:78442"/>
        <dbReference type="ChEBI" id="CHEBI:78494"/>
        <dbReference type="ChEBI" id="CHEBI:456215"/>
        <dbReference type="EC" id="6.1.1.4"/>
    </reaction>
</comment>
<comment type="subcellular location">
    <subcellularLocation>
        <location evidence="1">Cytoplasm</location>
    </subcellularLocation>
</comment>
<comment type="similarity">
    <text evidence="1">Belongs to the class-I aminoacyl-tRNA synthetase family.</text>
</comment>
<dbReference type="EC" id="6.1.1.4" evidence="1"/>
<dbReference type="EMBL" id="AM884177">
    <property type="protein sequence ID" value="CAP06854.1"/>
    <property type="molecule type" value="Genomic_DNA"/>
</dbReference>
<dbReference type="RefSeq" id="WP_009873640.1">
    <property type="nucleotide sequence ID" value="NC_010280.2"/>
</dbReference>
<dbReference type="SMR" id="B0BBI9"/>
<dbReference type="KEGG" id="ctl:CTLon_0456"/>
<dbReference type="HOGENOM" id="CLU_004427_0_0_0"/>
<dbReference type="Proteomes" id="UP001154401">
    <property type="component" value="Chromosome"/>
</dbReference>
<dbReference type="GO" id="GO:0005829">
    <property type="term" value="C:cytosol"/>
    <property type="evidence" value="ECO:0007669"/>
    <property type="project" value="TreeGrafter"/>
</dbReference>
<dbReference type="GO" id="GO:0002161">
    <property type="term" value="F:aminoacyl-tRNA deacylase activity"/>
    <property type="evidence" value="ECO:0007669"/>
    <property type="project" value="InterPro"/>
</dbReference>
<dbReference type="GO" id="GO:0005524">
    <property type="term" value="F:ATP binding"/>
    <property type="evidence" value="ECO:0007669"/>
    <property type="project" value="UniProtKB-UniRule"/>
</dbReference>
<dbReference type="GO" id="GO:0004823">
    <property type="term" value="F:leucine-tRNA ligase activity"/>
    <property type="evidence" value="ECO:0007669"/>
    <property type="project" value="UniProtKB-UniRule"/>
</dbReference>
<dbReference type="GO" id="GO:0006429">
    <property type="term" value="P:leucyl-tRNA aminoacylation"/>
    <property type="evidence" value="ECO:0007669"/>
    <property type="project" value="UniProtKB-UniRule"/>
</dbReference>
<dbReference type="CDD" id="cd07958">
    <property type="entry name" value="Anticodon_Ia_Leu_BEm"/>
    <property type="match status" value="1"/>
</dbReference>
<dbReference type="CDD" id="cd00812">
    <property type="entry name" value="LeuRS_core"/>
    <property type="match status" value="1"/>
</dbReference>
<dbReference type="FunFam" id="1.10.730.10:FF:000002">
    <property type="entry name" value="Leucine--tRNA ligase"/>
    <property type="match status" value="1"/>
</dbReference>
<dbReference type="FunFam" id="1.10.730.10:FF:000086">
    <property type="entry name" value="Leucine--tRNA ligase"/>
    <property type="match status" value="1"/>
</dbReference>
<dbReference type="FunFam" id="3.40.50.620:FF:000056">
    <property type="entry name" value="Leucine--tRNA ligase"/>
    <property type="match status" value="1"/>
</dbReference>
<dbReference type="FunFam" id="3.40.50.620:FF:000077">
    <property type="entry name" value="Leucine--tRNA ligase"/>
    <property type="match status" value="1"/>
</dbReference>
<dbReference type="Gene3D" id="3.40.50.620">
    <property type="entry name" value="HUPs"/>
    <property type="match status" value="2"/>
</dbReference>
<dbReference type="Gene3D" id="1.10.730.10">
    <property type="entry name" value="Isoleucyl-tRNA Synthetase, Domain 1"/>
    <property type="match status" value="1"/>
</dbReference>
<dbReference type="HAMAP" id="MF_00049_B">
    <property type="entry name" value="Leu_tRNA_synth_B"/>
    <property type="match status" value="1"/>
</dbReference>
<dbReference type="InterPro" id="IPR001412">
    <property type="entry name" value="aa-tRNA-synth_I_CS"/>
</dbReference>
<dbReference type="InterPro" id="IPR002302">
    <property type="entry name" value="Leu-tRNA-ligase"/>
</dbReference>
<dbReference type="InterPro" id="IPR025709">
    <property type="entry name" value="Leu_tRNA-synth_edit"/>
</dbReference>
<dbReference type="InterPro" id="IPR013155">
    <property type="entry name" value="M/V/L/I-tRNA-synth_anticd-bd"/>
</dbReference>
<dbReference type="InterPro" id="IPR015413">
    <property type="entry name" value="Methionyl/Leucyl_tRNA_Synth"/>
</dbReference>
<dbReference type="InterPro" id="IPR014729">
    <property type="entry name" value="Rossmann-like_a/b/a_fold"/>
</dbReference>
<dbReference type="InterPro" id="IPR009080">
    <property type="entry name" value="tRNAsynth_Ia_anticodon-bd"/>
</dbReference>
<dbReference type="InterPro" id="IPR009008">
    <property type="entry name" value="Val/Leu/Ile-tRNA-synth_edit"/>
</dbReference>
<dbReference type="NCBIfam" id="TIGR00396">
    <property type="entry name" value="leuS_bact"/>
    <property type="match status" value="1"/>
</dbReference>
<dbReference type="PANTHER" id="PTHR43740:SF2">
    <property type="entry name" value="LEUCINE--TRNA LIGASE, MITOCHONDRIAL"/>
    <property type="match status" value="1"/>
</dbReference>
<dbReference type="PANTHER" id="PTHR43740">
    <property type="entry name" value="LEUCYL-TRNA SYNTHETASE"/>
    <property type="match status" value="1"/>
</dbReference>
<dbReference type="Pfam" id="PF08264">
    <property type="entry name" value="Anticodon_1"/>
    <property type="match status" value="1"/>
</dbReference>
<dbReference type="Pfam" id="PF13603">
    <property type="entry name" value="tRNA-synt_1_2"/>
    <property type="match status" value="1"/>
</dbReference>
<dbReference type="Pfam" id="PF09334">
    <property type="entry name" value="tRNA-synt_1g"/>
    <property type="match status" value="1"/>
</dbReference>
<dbReference type="PRINTS" id="PR00985">
    <property type="entry name" value="TRNASYNTHLEU"/>
</dbReference>
<dbReference type="SUPFAM" id="SSF47323">
    <property type="entry name" value="Anticodon-binding domain of a subclass of class I aminoacyl-tRNA synthetases"/>
    <property type="match status" value="1"/>
</dbReference>
<dbReference type="SUPFAM" id="SSF52374">
    <property type="entry name" value="Nucleotidylyl transferase"/>
    <property type="match status" value="1"/>
</dbReference>
<dbReference type="SUPFAM" id="SSF50677">
    <property type="entry name" value="ValRS/IleRS/LeuRS editing domain"/>
    <property type="match status" value="1"/>
</dbReference>
<dbReference type="PROSITE" id="PS00178">
    <property type="entry name" value="AA_TRNA_LIGASE_I"/>
    <property type="match status" value="1"/>
</dbReference>
<name>SYL_CHLTB</name>
<proteinExistence type="inferred from homology"/>
<organism>
    <name type="scientific">Chlamydia trachomatis serovar L2b (strain UCH-1/proctitis)</name>
    <dbReference type="NCBI Taxonomy" id="471473"/>
    <lineage>
        <taxon>Bacteria</taxon>
        <taxon>Pseudomonadati</taxon>
        <taxon>Chlamydiota</taxon>
        <taxon>Chlamydiia</taxon>
        <taxon>Chlamydiales</taxon>
        <taxon>Chlamydiaceae</taxon>
        <taxon>Chlamydia/Chlamydophila group</taxon>
        <taxon>Chlamydia</taxon>
    </lineage>
</organism>
<evidence type="ECO:0000255" key="1">
    <source>
        <dbReference type="HAMAP-Rule" id="MF_00049"/>
    </source>
</evidence>
<reference key="1">
    <citation type="journal article" date="2008" name="Genome Res.">
        <title>Chlamydia trachomatis: genome sequence analysis of lymphogranuloma venereum isolates.</title>
        <authorList>
            <person name="Thomson N.R."/>
            <person name="Holden M.T.G."/>
            <person name="Carder C."/>
            <person name="Lennard N."/>
            <person name="Lockey S.J."/>
            <person name="Marsh P."/>
            <person name="Skipp P."/>
            <person name="O'Connor C.D."/>
            <person name="Goodhead I."/>
            <person name="Norbertzcak H."/>
            <person name="Harris B."/>
            <person name="Ormond D."/>
            <person name="Rance R."/>
            <person name="Quail M.A."/>
            <person name="Parkhill J."/>
            <person name="Stephens R.S."/>
            <person name="Clarke I.N."/>
        </authorList>
    </citation>
    <scope>NUCLEOTIDE SEQUENCE [LARGE SCALE GENOMIC DNA]</scope>
    <source>
        <strain>UCH-1/proctitis</strain>
    </source>
</reference>
<sequence>MRYDPGLIEEKWQKFWKNEQVFKAEEDETKTKYYVLDMFPYPSGAGLHVGHLIGYTATDIVARCKRAQGFSVLHPMGWDSFGLPAEQYAIRTGTHPRETTEKNIANFKKQLTAMGFSYDESREFATSDPEYYKWTQKLFLILYEKGLAYMADMAVNYCPELGTVLSNEEIENGFSVDGGYPVERRMLRQWVLRITAFADQLLEGLDELDWPESVKQLQKNWIGKSSGASVNFATEHGAIEVFTTRPDTLIGVSFLALAPEHPLVDLLTSDEQKAVVAQYIKETQSKSERDRISEMKTKSGVFTGSYAKHPVTHELIPIWIADYVLMGFGSGAVMGVPAHDERDLLFAEQFNLPVVSVLNEEGVCINSCCEGFHLDGLSGEEAKQYVINFLEENHLGAAKIAYKLRDWLFSRQRYWGEPIPIIHFEDGSCRPLRDDELPLLPPEIQDYRPEGVGQGPLAKVREWVQVFDTETQRAGKRETHTMPQWAGSCWYYLRFCDAHNSAAPWAKEKEQYWMPVDLYIGGAEHAVLHLLYARFWHQVFYEAGIVSTPEPFKKLVNQGLVLATSYRIPGKGYIYPETAKEENGKWVAPSGEELDVRQEKMSKSKLNGVDPQILIDEFGADAVRMYAMFSGPLDKNKLWSNQGVAGCRRFLNRFYEMVSSDRVKEDNNFEGLSLAHKLVQRVTDAIEKLSLNTIPSSFMEFINDFVKLAVYPKSAVEMAVRALAPIAPHISEELWVLLGNSPGVQKSGWPSVLPEYLEEQTVTIVVQVNGKLRARLDIMKDASKEEVLALARESASKYLEGCEVKKAIFVPARLVNFVV</sequence>
<feature type="chain" id="PRO_1000091307" description="Leucine--tRNA ligase">
    <location>
        <begin position="1"/>
        <end position="819"/>
    </location>
</feature>
<feature type="short sequence motif" description="'HIGH' region">
    <location>
        <begin position="40"/>
        <end position="51"/>
    </location>
</feature>
<feature type="short sequence motif" description="'KMSKS' region">
    <location>
        <begin position="600"/>
        <end position="604"/>
    </location>
</feature>
<feature type="binding site" evidence="1">
    <location>
        <position position="603"/>
    </location>
    <ligand>
        <name>ATP</name>
        <dbReference type="ChEBI" id="CHEBI:30616"/>
    </ligand>
</feature>
<keyword id="KW-0030">Aminoacyl-tRNA synthetase</keyword>
<keyword id="KW-0067">ATP-binding</keyword>
<keyword id="KW-0963">Cytoplasm</keyword>
<keyword id="KW-0436">Ligase</keyword>
<keyword id="KW-0547">Nucleotide-binding</keyword>
<keyword id="KW-0648">Protein biosynthesis</keyword>